<name>SHLB2_MOUSE</name>
<accession>Q8R3V5</accession>
<accession>Q3TIQ1</accession>
<accession>Q3U2J4</accession>
<accession>Q3U824</accession>
<accession>Q8K140</accession>
<accession>Q91ZI7</accession>
<gene>
    <name type="primary">Sh3glb2</name>
    <name type="synonym">Kiaa1848</name>
</gene>
<feature type="chain" id="PRO_0000146756" description="Endophilin-B2">
    <location>
        <begin position="1"/>
        <end position="400"/>
    </location>
</feature>
<feature type="domain" description="BAR" evidence="6">
    <location>
        <begin position="24"/>
        <end position="287"/>
    </location>
</feature>
<feature type="domain" description="SH3" evidence="5">
    <location>
        <begin position="340"/>
        <end position="400"/>
    </location>
</feature>
<feature type="region of interest" description="Membrane-binding amphipathic helix" evidence="1">
    <location>
        <begin position="1"/>
        <end position="27"/>
    </location>
</feature>
<feature type="coiled-coil region" evidence="4">
    <location>
        <begin position="205"/>
        <end position="234"/>
    </location>
</feature>
<feature type="modified residue" description="N-acetylmethionine" evidence="3">
    <location>
        <position position="1"/>
    </location>
</feature>
<feature type="modified residue" description="Phosphoserine" evidence="3">
    <location>
        <position position="10"/>
    </location>
</feature>
<feature type="modified residue" description="Phosphoserine" evidence="2">
    <location>
        <position position="400"/>
    </location>
</feature>
<feature type="splice variant" id="VSP_009280" description="In isoform 3." evidence="8">
    <location>
        <begin position="188"/>
        <end position="208"/>
    </location>
</feature>
<feature type="splice variant" id="VSP_028795" description="In isoform 1." evidence="7 8 9 10">
    <original>SSQGAI</original>
    <variation>R</variation>
    <location>
        <begin position="280"/>
        <end position="285"/>
    </location>
</feature>
<feature type="sequence conflict" description="In Ref. 1; AAL24820." evidence="11" ref="1">
    <original>K</original>
    <variation>N</variation>
    <location>
        <position position="7"/>
    </location>
</feature>
<feature type="sequence conflict" description="In Ref. 4; BAE31195." evidence="11" ref="4">
    <original>L</original>
    <variation>M</variation>
    <location>
        <position position="332"/>
    </location>
</feature>
<proteinExistence type="evidence at protein level"/>
<organism>
    <name type="scientific">Mus musculus</name>
    <name type="common">Mouse</name>
    <dbReference type="NCBI Taxonomy" id="10090"/>
    <lineage>
        <taxon>Eukaryota</taxon>
        <taxon>Metazoa</taxon>
        <taxon>Chordata</taxon>
        <taxon>Craniata</taxon>
        <taxon>Vertebrata</taxon>
        <taxon>Euteleostomi</taxon>
        <taxon>Mammalia</taxon>
        <taxon>Eutheria</taxon>
        <taxon>Euarchontoglires</taxon>
        <taxon>Glires</taxon>
        <taxon>Rodentia</taxon>
        <taxon>Myomorpha</taxon>
        <taxon>Muroidea</taxon>
        <taxon>Muridae</taxon>
        <taxon>Murinae</taxon>
        <taxon>Mus</taxon>
        <taxon>Mus</taxon>
    </lineage>
</organism>
<reference key="1">
    <citation type="submission" date="2001-09" db="EMBL/GenBank/DDBJ databases">
        <title>TIAF1 physically interacts with SH3GLB2.</title>
        <authorList>
            <person name="Chang N.-S."/>
            <person name="Doherty J."/>
            <person name="Schultz L."/>
        </authorList>
    </citation>
    <scope>NUCLEOTIDE SEQUENCE [MRNA] (ISOFORM 1)</scope>
    <source>
        <strain>BALB/cJ</strain>
        <tissue>Heart</tissue>
    </source>
</reference>
<reference key="2">
    <citation type="journal article" date="2003" name="DNA Res.">
        <title>Prediction of the coding sequences of mouse homologues of KIAA gene: III. The complete nucleotide sequences of 500 mouse KIAA-homologous cDNAs identified by screening of terminal sequences of cDNA clones randomly sampled from size-fractionated libraries.</title>
        <authorList>
            <person name="Okazaki N."/>
            <person name="Kikuno R."/>
            <person name="Ohara R."/>
            <person name="Inamoto S."/>
            <person name="Koseki H."/>
            <person name="Hiraoka S."/>
            <person name="Saga Y."/>
            <person name="Nagase T."/>
            <person name="Ohara O."/>
            <person name="Koga H."/>
        </authorList>
    </citation>
    <scope>NUCLEOTIDE SEQUENCE [LARGE SCALE MRNA] (ISOFORM 1)</scope>
    <source>
        <tissue>Brain</tissue>
    </source>
</reference>
<reference key="3">
    <citation type="submission" date="2003-07" db="EMBL/GenBank/DDBJ databases">
        <authorList>
            <person name="Okazaki N."/>
            <person name="Kikuno R."/>
            <person name="Nagase T."/>
            <person name="Ohara O."/>
            <person name="Koga H."/>
        </authorList>
    </citation>
    <scope>SEQUENCE REVISION</scope>
</reference>
<reference key="4">
    <citation type="journal article" date="2005" name="Science">
        <title>The transcriptional landscape of the mammalian genome.</title>
        <authorList>
            <person name="Carninci P."/>
            <person name="Kasukawa T."/>
            <person name="Katayama S."/>
            <person name="Gough J."/>
            <person name="Frith M.C."/>
            <person name="Maeda N."/>
            <person name="Oyama R."/>
            <person name="Ravasi T."/>
            <person name="Lenhard B."/>
            <person name="Wells C."/>
            <person name="Kodzius R."/>
            <person name="Shimokawa K."/>
            <person name="Bajic V.B."/>
            <person name="Brenner S.E."/>
            <person name="Batalov S."/>
            <person name="Forrest A.R."/>
            <person name="Zavolan M."/>
            <person name="Davis M.J."/>
            <person name="Wilming L.G."/>
            <person name="Aidinis V."/>
            <person name="Allen J.E."/>
            <person name="Ambesi-Impiombato A."/>
            <person name="Apweiler R."/>
            <person name="Aturaliya R.N."/>
            <person name="Bailey T.L."/>
            <person name="Bansal M."/>
            <person name="Baxter L."/>
            <person name="Beisel K.W."/>
            <person name="Bersano T."/>
            <person name="Bono H."/>
            <person name="Chalk A.M."/>
            <person name="Chiu K.P."/>
            <person name="Choudhary V."/>
            <person name="Christoffels A."/>
            <person name="Clutterbuck D.R."/>
            <person name="Crowe M.L."/>
            <person name="Dalla E."/>
            <person name="Dalrymple B.P."/>
            <person name="de Bono B."/>
            <person name="Della Gatta G."/>
            <person name="di Bernardo D."/>
            <person name="Down T."/>
            <person name="Engstrom P."/>
            <person name="Fagiolini M."/>
            <person name="Faulkner G."/>
            <person name="Fletcher C.F."/>
            <person name="Fukushima T."/>
            <person name="Furuno M."/>
            <person name="Futaki S."/>
            <person name="Gariboldi M."/>
            <person name="Georgii-Hemming P."/>
            <person name="Gingeras T.R."/>
            <person name="Gojobori T."/>
            <person name="Green R.E."/>
            <person name="Gustincich S."/>
            <person name="Harbers M."/>
            <person name="Hayashi Y."/>
            <person name="Hensch T.K."/>
            <person name="Hirokawa N."/>
            <person name="Hill D."/>
            <person name="Huminiecki L."/>
            <person name="Iacono M."/>
            <person name="Ikeo K."/>
            <person name="Iwama A."/>
            <person name="Ishikawa T."/>
            <person name="Jakt M."/>
            <person name="Kanapin A."/>
            <person name="Katoh M."/>
            <person name="Kawasawa Y."/>
            <person name="Kelso J."/>
            <person name="Kitamura H."/>
            <person name="Kitano H."/>
            <person name="Kollias G."/>
            <person name="Krishnan S.P."/>
            <person name="Kruger A."/>
            <person name="Kummerfeld S.K."/>
            <person name="Kurochkin I.V."/>
            <person name="Lareau L.F."/>
            <person name="Lazarevic D."/>
            <person name="Lipovich L."/>
            <person name="Liu J."/>
            <person name="Liuni S."/>
            <person name="McWilliam S."/>
            <person name="Madan Babu M."/>
            <person name="Madera M."/>
            <person name="Marchionni L."/>
            <person name="Matsuda H."/>
            <person name="Matsuzawa S."/>
            <person name="Miki H."/>
            <person name="Mignone F."/>
            <person name="Miyake S."/>
            <person name="Morris K."/>
            <person name="Mottagui-Tabar S."/>
            <person name="Mulder N."/>
            <person name="Nakano N."/>
            <person name="Nakauchi H."/>
            <person name="Ng P."/>
            <person name="Nilsson R."/>
            <person name="Nishiguchi S."/>
            <person name="Nishikawa S."/>
            <person name="Nori F."/>
            <person name="Ohara O."/>
            <person name="Okazaki Y."/>
            <person name="Orlando V."/>
            <person name="Pang K.C."/>
            <person name="Pavan W.J."/>
            <person name="Pavesi G."/>
            <person name="Pesole G."/>
            <person name="Petrovsky N."/>
            <person name="Piazza S."/>
            <person name="Reed J."/>
            <person name="Reid J.F."/>
            <person name="Ring B.Z."/>
            <person name="Ringwald M."/>
            <person name="Rost B."/>
            <person name="Ruan Y."/>
            <person name="Salzberg S.L."/>
            <person name="Sandelin A."/>
            <person name="Schneider C."/>
            <person name="Schoenbach C."/>
            <person name="Sekiguchi K."/>
            <person name="Semple C.A."/>
            <person name="Seno S."/>
            <person name="Sessa L."/>
            <person name="Sheng Y."/>
            <person name="Shibata Y."/>
            <person name="Shimada H."/>
            <person name="Shimada K."/>
            <person name="Silva D."/>
            <person name="Sinclair B."/>
            <person name="Sperling S."/>
            <person name="Stupka E."/>
            <person name="Sugiura K."/>
            <person name="Sultana R."/>
            <person name="Takenaka Y."/>
            <person name="Taki K."/>
            <person name="Tammoja K."/>
            <person name="Tan S.L."/>
            <person name="Tang S."/>
            <person name="Taylor M.S."/>
            <person name="Tegner J."/>
            <person name="Teichmann S.A."/>
            <person name="Ueda H.R."/>
            <person name="van Nimwegen E."/>
            <person name="Verardo R."/>
            <person name="Wei C.L."/>
            <person name="Yagi K."/>
            <person name="Yamanishi H."/>
            <person name="Zabarovsky E."/>
            <person name="Zhu S."/>
            <person name="Zimmer A."/>
            <person name="Hide W."/>
            <person name="Bult C."/>
            <person name="Grimmond S.M."/>
            <person name="Teasdale R.D."/>
            <person name="Liu E.T."/>
            <person name="Brusic V."/>
            <person name="Quackenbush J."/>
            <person name="Wahlestedt C."/>
            <person name="Mattick J.S."/>
            <person name="Hume D.A."/>
            <person name="Kai C."/>
            <person name="Sasaki D."/>
            <person name="Tomaru Y."/>
            <person name="Fukuda S."/>
            <person name="Kanamori-Katayama M."/>
            <person name="Suzuki M."/>
            <person name="Aoki J."/>
            <person name="Arakawa T."/>
            <person name="Iida J."/>
            <person name="Imamura K."/>
            <person name="Itoh M."/>
            <person name="Kato T."/>
            <person name="Kawaji H."/>
            <person name="Kawagashira N."/>
            <person name="Kawashima T."/>
            <person name="Kojima M."/>
            <person name="Kondo S."/>
            <person name="Konno H."/>
            <person name="Nakano K."/>
            <person name="Ninomiya N."/>
            <person name="Nishio T."/>
            <person name="Okada M."/>
            <person name="Plessy C."/>
            <person name="Shibata K."/>
            <person name="Shiraki T."/>
            <person name="Suzuki S."/>
            <person name="Tagami M."/>
            <person name="Waki K."/>
            <person name="Watahiki A."/>
            <person name="Okamura-Oho Y."/>
            <person name="Suzuki H."/>
            <person name="Kawai J."/>
            <person name="Hayashizaki Y."/>
        </authorList>
    </citation>
    <scope>NUCLEOTIDE SEQUENCE [LARGE SCALE MRNA] (ISOFORMS 1 AND 2)</scope>
    <source>
        <strain>C57BL/6J</strain>
        <strain>DBA/2J</strain>
        <strain>NOD</strain>
        <tissue>Bone marrow</tissue>
        <tissue>Dendritic cell</tissue>
    </source>
</reference>
<reference key="5">
    <citation type="journal article" date="2009" name="PLoS Biol.">
        <title>Lineage-specific biology revealed by a finished genome assembly of the mouse.</title>
        <authorList>
            <person name="Church D.M."/>
            <person name="Goodstadt L."/>
            <person name="Hillier L.W."/>
            <person name="Zody M.C."/>
            <person name="Goldstein S."/>
            <person name="She X."/>
            <person name="Bult C.J."/>
            <person name="Agarwala R."/>
            <person name="Cherry J.L."/>
            <person name="DiCuccio M."/>
            <person name="Hlavina W."/>
            <person name="Kapustin Y."/>
            <person name="Meric P."/>
            <person name="Maglott D."/>
            <person name="Birtle Z."/>
            <person name="Marques A.C."/>
            <person name="Graves T."/>
            <person name="Zhou S."/>
            <person name="Teague B."/>
            <person name="Potamousis K."/>
            <person name="Churas C."/>
            <person name="Place M."/>
            <person name="Herschleb J."/>
            <person name="Runnheim R."/>
            <person name="Forrest D."/>
            <person name="Amos-Landgraf J."/>
            <person name="Schwartz D.C."/>
            <person name="Cheng Z."/>
            <person name="Lindblad-Toh K."/>
            <person name="Eichler E.E."/>
            <person name="Ponting C.P."/>
        </authorList>
    </citation>
    <scope>NUCLEOTIDE SEQUENCE [LARGE SCALE GENOMIC DNA]</scope>
    <source>
        <strain>C57BL/6J</strain>
    </source>
</reference>
<reference key="6">
    <citation type="journal article" date="2004" name="Genome Res.">
        <title>The status, quality, and expansion of the NIH full-length cDNA project: the Mammalian Gene Collection (MGC).</title>
        <authorList>
            <consortium name="The MGC Project Team"/>
        </authorList>
    </citation>
    <scope>NUCLEOTIDE SEQUENCE [LARGE SCALE MRNA] (ISOFORMS 1 AND 3)</scope>
    <source>
        <strain>FVB/N</strain>
        <tissue>Mammary gland</tissue>
        <tissue>Salivary gland</tissue>
    </source>
</reference>
<reference key="7">
    <citation type="journal article" date="2010" name="Cell">
        <title>A tissue-specific atlas of mouse protein phosphorylation and expression.</title>
        <authorList>
            <person name="Huttlin E.L."/>
            <person name="Jedrychowski M.P."/>
            <person name="Elias J.E."/>
            <person name="Goswami T."/>
            <person name="Rad R."/>
            <person name="Beausoleil S.A."/>
            <person name="Villen J."/>
            <person name="Haas W."/>
            <person name="Sowa M.E."/>
            <person name="Gygi S.P."/>
        </authorList>
    </citation>
    <scope>IDENTIFICATION BY MASS SPECTROMETRY [LARGE SCALE ANALYSIS]</scope>
    <source>
        <tissue>Brain</tissue>
        <tissue>Brown adipose tissue</tissue>
        <tissue>Heart</tissue>
        <tissue>Pancreas</tissue>
    </source>
</reference>
<evidence type="ECO:0000250" key="1"/>
<evidence type="ECO:0000250" key="2">
    <source>
        <dbReference type="UniProtKB" id="Q5PPJ9"/>
    </source>
</evidence>
<evidence type="ECO:0000250" key="3">
    <source>
        <dbReference type="UniProtKB" id="Q9NR46"/>
    </source>
</evidence>
<evidence type="ECO:0000255" key="4"/>
<evidence type="ECO:0000255" key="5">
    <source>
        <dbReference type="PROSITE-ProRule" id="PRU00192"/>
    </source>
</evidence>
<evidence type="ECO:0000255" key="6">
    <source>
        <dbReference type="PROSITE-ProRule" id="PRU00361"/>
    </source>
</evidence>
<evidence type="ECO:0000303" key="7">
    <source>
    </source>
</evidence>
<evidence type="ECO:0000303" key="8">
    <source>
    </source>
</evidence>
<evidence type="ECO:0000303" key="9">
    <source>
    </source>
</evidence>
<evidence type="ECO:0000303" key="10">
    <source ref="1"/>
</evidence>
<evidence type="ECO:0000305" key="11"/>
<protein>
    <recommendedName>
        <fullName>Endophilin-B2</fullName>
    </recommendedName>
    <alternativeName>
        <fullName>SH3 domain-containing GRB2-like protein B2</fullName>
    </alternativeName>
</protein>
<dbReference type="EMBL" id="AF426314">
    <property type="protein sequence ID" value="AAL24820.1"/>
    <property type="molecule type" value="mRNA"/>
</dbReference>
<dbReference type="EMBL" id="AK129455">
    <property type="protein sequence ID" value="BAC98265.2"/>
    <property type="status" value="ALT_INIT"/>
    <property type="molecule type" value="Transcribed_RNA"/>
</dbReference>
<dbReference type="EMBL" id="AK152409">
    <property type="protein sequence ID" value="BAE31195.1"/>
    <property type="molecule type" value="mRNA"/>
</dbReference>
<dbReference type="EMBL" id="AK155248">
    <property type="protein sequence ID" value="BAE33146.1"/>
    <property type="molecule type" value="mRNA"/>
</dbReference>
<dbReference type="EMBL" id="AK167762">
    <property type="protein sequence ID" value="BAE39795.1"/>
    <property type="molecule type" value="mRNA"/>
</dbReference>
<dbReference type="EMBL" id="AL954388">
    <property type="status" value="NOT_ANNOTATED_CDS"/>
    <property type="molecule type" value="Genomic_DNA"/>
</dbReference>
<dbReference type="EMBL" id="BC024477">
    <property type="protein sequence ID" value="AAH24477.1"/>
    <property type="molecule type" value="mRNA"/>
</dbReference>
<dbReference type="EMBL" id="BC028859">
    <property type="protein sequence ID" value="AAH28859.1"/>
    <property type="status" value="ALT_SEQ"/>
    <property type="molecule type" value="mRNA"/>
</dbReference>
<dbReference type="CCDS" id="CCDS15879.1">
    <molecule id="Q8R3V5-1"/>
</dbReference>
<dbReference type="CCDS" id="CCDS71020.1">
    <molecule id="Q8R3V5-4"/>
</dbReference>
<dbReference type="RefSeq" id="NP_001276638.1">
    <molecule id="Q8R3V5-4"/>
    <property type="nucleotide sequence ID" value="NM_001289709.1"/>
</dbReference>
<dbReference type="RefSeq" id="NP_647463.1">
    <molecule id="Q8R3V5-1"/>
    <property type="nucleotide sequence ID" value="NM_139302.2"/>
</dbReference>
<dbReference type="RefSeq" id="XP_006498002.1">
    <molecule id="Q8R3V5-3"/>
    <property type="nucleotide sequence ID" value="XM_006497939.2"/>
</dbReference>
<dbReference type="SMR" id="Q8R3V5"/>
<dbReference type="BioGRID" id="230668">
    <property type="interactions" value="23"/>
</dbReference>
<dbReference type="FunCoup" id="Q8R3V5">
    <property type="interactions" value="1835"/>
</dbReference>
<dbReference type="IntAct" id="Q8R3V5">
    <property type="interactions" value="1"/>
</dbReference>
<dbReference type="STRING" id="10090.ENSMUSP00000109251"/>
<dbReference type="GlyGen" id="Q8R3V5">
    <property type="glycosylation" value="1 site"/>
</dbReference>
<dbReference type="iPTMnet" id="Q8R3V5"/>
<dbReference type="PhosphoSitePlus" id="Q8R3V5"/>
<dbReference type="SwissPalm" id="Q8R3V5"/>
<dbReference type="REPRODUCTION-2DPAGE" id="Q8R3V5"/>
<dbReference type="PaxDb" id="10090-ENSMUSP00000028214"/>
<dbReference type="PeptideAtlas" id="Q8R3V5"/>
<dbReference type="ProteomicsDB" id="255411">
    <molecule id="Q8R3V5-4"/>
</dbReference>
<dbReference type="ProteomicsDB" id="255412">
    <molecule id="Q8R3V5-1"/>
</dbReference>
<dbReference type="ProteomicsDB" id="255413">
    <molecule id="Q8R3V5-3"/>
</dbReference>
<dbReference type="Pumba" id="Q8R3V5"/>
<dbReference type="Antibodypedia" id="17774">
    <property type="antibodies" value="141 antibodies from 24 providers"/>
</dbReference>
<dbReference type="DNASU" id="227700"/>
<dbReference type="Ensembl" id="ENSMUST00000028214.15">
    <molecule id="Q8R3V5-1"/>
    <property type="protein sequence ID" value="ENSMUSP00000028214.9"/>
    <property type="gene ID" value="ENSMUSG00000026860.17"/>
</dbReference>
<dbReference type="Ensembl" id="ENSMUST00000100215.11">
    <molecule id="Q8R3V5-4"/>
    <property type="protein sequence ID" value="ENSMUSP00000097788.5"/>
    <property type="gene ID" value="ENSMUSG00000026860.17"/>
</dbReference>
<dbReference type="Ensembl" id="ENSMUST00000163668.3">
    <molecule id="Q8R3V5-3"/>
    <property type="protein sequence ID" value="ENSMUSP00000131545.3"/>
    <property type="gene ID" value="ENSMUSG00000026860.17"/>
</dbReference>
<dbReference type="GeneID" id="227700"/>
<dbReference type="KEGG" id="mmu:227700"/>
<dbReference type="UCSC" id="uc008jcc.2">
    <molecule id="Q8R3V5-1"/>
    <property type="organism name" value="mouse"/>
</dbReference>
<dbReference type="UCSC" id="uc008jcd.2">
    <molecule id="Q8R3V5-4"/>
    <property type="organism name" value="mouse"/>
</dbReference>
<dbReference type="AGR" id="MGI:2385131"/>
<dbReference type="CTD" id="56904"/>
<dbReference type="MGI" id="MGI:2385131">
    <property type="gene designation" value="Sh3glb2"/>
</dbReference>
<dbReference type="VEuPathDB" id="HostDB:ENSMUSG00000026860"/>
<dbReference type="eggNOG" id="KOG3725">
    <property type="taxonomic scope" value="Eukaryota"/>
</dbReference>
<dbReference type="GeneTree" id="ENSGT00940000155841"/>
<dbReference type="HOGENOM" id="CLU_043817_1_1_1"/>
<dbReference type="InParanoid" id="Q8R3V5"/>
<dbReference type="OMA" id="DWIMAER"/>
<dbReference type="OrthoDB" id="14167at2759"/>
<dbReference type="PhylomeDB" id="Q8R3V5"/>
<dbReference type="TreeFam" id="TF313281"/>
<dbReference type="BioGRID-ORCS" id="227700">
    <property type="hits" value="3 hits in 79 CRISPR screens"/>
</dbReference>
<dbReference type="ChiTaRS" id="Sh3glb2">
    <property type="organism name" value="mouse"/>
</dbReference>
<dbReference type="PRO" id="PR:Q8R3V5"/>
<dbReference type="Proteomes" id="UP000000589">
    <property type="component" value="Chromosome 2"/>
</dbReference>
<dbReference type="RNAct" id="Q8R3V5">
    <property type="molecule type" value="protein"/>
</dbReference>
<dbReference type="Bgee" id="ENSMUSG00000026860">
    <property type="expression patterns" value="Expressed in superior frontal gyrus and 261 other cell types or tissues"/>
</dbReference>
<dbReference type="ExpressionAtlas" id="Q8R3V5">
    <property type="expression patterns" value="baseline and differential"/>
</dbReference>
<dbReference type="GO" id="GO:0005737">
    <property type="term" value="C:cytoplasm"/>
    <property type="evidence" value="ECO:0007669"/>
    <property type="project" value="UniProtKB-SubCell"/>
</dbReference>
<dbReference type="CDD" id="cd07617">
    <property type="entry name" value="BAR_Endophilin_B2"/>
    <property type="match status" value="1"/>
</dbReference>
<dbReference type="CDD" id="cd11944">
    <property type="entry name" value="SH3_Endophilin_B2"/>
    <property type="match status" value="1"/>
</dbReference>
<dbReference type="FunFam" id="1.20.1270.60:FF:000017">
    <property type="entry name" value="endophilin-B2 isoform X1"/>
    <property type="match status" value="1"/>
</dbReference>
<dbReference type="FunFam" id="2.30.30.40:FF:000028">
    <property type="entry name" value="endophilin-B2 isoform X1"/>
    <property type="match status" value="1"/>
</dbReference>
<dbReference type="Gene3D" id="1.20.1270.60">
    <property type="entry name" value="Arfaptin homology (AH) domain/BAR domain"/>
    <property type="match status" value="1"/>
</dbReference>
<dbReference type="Gene3D" id="2.30.30.40">
    <property type="entry name" value="SH3 Domains"/>
    <property type="match status" value="1"/>
</dbReference>
<dbReference type="InterPro" id="IPR027267">
    <property type="entry name" value="AH/BAR_dom_sf"/>
</dbReference>
<dbReference type="InterPro" id="IPR004148">
    <property type="entry name" value="BAR_dom"/>
</dbReference>
<dbReference type="InterPro" id="IPR035640">
    <property type="entry name" value="Endophilin_B2_SH3"/>
</dbReference>
<dbReference type="InterPro" id="IPR050384">
    <property type="entry name" value="Endophilin_SH3RF"/>
</dbReference>
<dbReference type="InterPro" id="IPR036028">
    <property type="entry name" value="SH3-like_dom_sf"/>
</dbReference>
<dbReference type="InterPro" id="IPR001452">
    <property type="entry name" value="SH3_domain"/>
</dbReference>
<dbReference type="PANTHER" id="PTHR14167:SF68">
    <property type="entry name" value="DREBRIN-LIKE PROTEIN-RELATED"/>
    <property type="match status" value="1"/>
</dbReference>
<dbReference type="PANTHER" id="PTHR14167">
    <property type="entry name" value="SH3 DOMAIN-CONTAINING"/>
    <property type="match status" value="1"/>
</dbReference>
<dbReference type="Pfam" id="PF03114">
    <property type="entry name" value="BAR"/>
    <property type="match status" value="1"/>
</dbReference>
<dbReference type="Pfam" id="PF14604">
    <property type="entry name" value="SH3_9"/>
    <property type="match status" value="1"/>
</dbReference>
<dbReference type="SMART" id="SM00721">
    <property type="entry name" value="BAR"/>
    <property type="match status" value="1"/>
</dbReference>
<dbReference type="SMART" id="SM00326">
    <property type="entry name" value="SH3"/>
    <property type="match status" value="1"/>
</dbReference>
<dbReference type="SUPFAM" id="SSF103657">
    <property type="entry name" value="BAR/IMD domain-like"/>
    <property type="match status" value="1"/>
</dbReference>
<dbReference type="SUPFAM" id="SSF50044">
    <property type="entry name" value="SH3-domain"/>
    <property type="match status" value="1"/>
</dbReference>
<dbReference type="PROSITE" id="PS51021">
    <property type="entry name" value="BAR"/>
    <property type="match status" value="1"/>
</dbReference>
<dbReference type="PROSITE" id="PS50002">
    <property type="entry name" value="SH3"/>
    <property type="match status" value="1"/>
</dbReference>
<sequence length="400" mass="44503">MDFNMKKLASDAGIFFTRAVQFTEEKFGQAEKTELDAHFENLLARADSTKNWTERILRQTEVLLQPNPSARVEEFLYEKLDRKVPSRVTNGELLAQYMAEAASELGPSTPYGKTLIKVSEAEKRLGAAERDFIHTASLSFLTPLRNFLEGDWKTISKERRLLQNRRLDLDACKARLKKAKAAEAKATTVPDFQETRPRNYILSASASALWNDEVDKAEQELRVAQTEFDRQAEVTRLLLEGISSTHVNHLRCLHEFVKSQTTYYAQCYRHMLDLQKQLGSSQGAIFPGTFVGTTEPASPPLSSTSPTTTAATMPVVPTGAVLAPPEEAALCLEEVAPPASGTRKARVLYDYEAADSSELALLADELITVYSLPGMDPDWLIGERGNKKGKVPVTYLELLS</sequence>
<keyword id="KW-0007">Acetylation</keyword>
<keyword id="KW-0025">Alternative splicing</keyword>
<keyword id="KW-0175">Coiled coil</keyword>
<keyword id="KW-0963">Cytoplasm</keyword>
<keyword id="KW-0597">Phosphoprotein</keyword>
<keyword id="KW-1185">Reference proteome</keyword>
<keyword id="KW-0728">SH3 domain</keyword>
<comment type="subunit">
    <text evidence="1">Homodimer, and heterodimer with SH3GLB1.</text>
</comment>
<comment type="subcellular location">
    <subcellularLocation>
        <location evidence="1">Cytoplasm</location>
    </subcellularLocation>
</comment>
<comment type="alternative products">
    <event type="alternative splicing"/>
    <isoform>
        <id>Q8R3V5-4</id>
        <name>2</name>
        <sequence type="displayed"/>
    </isoform>
    <isoform>
        <id>Q8R3V5-1</id>
        <name>1</name>
        <sequence type="described" ref="VSP_028795"/>
    </isoform>
    <isoform>
        <id>Q8R3V5-3</id>
        <name>3</name>
        <sequence type="described" ref="VSP_009280"/>
    </isoform>
</comment>
<comment type="similarity">
    <text evidence="11">Belongs to the endophilin family.</text>
</comment>
<comment type="sequence caution" evidence="11">
    <conflict type="miscellaneous discrepancy">
        <sequence resource="EMBL-CDS" id="AAH28859"/>
    </conflict>
    <text>Intron retention.</text>
</comment>
<comment type="sequence caution" evidence="11">
    <conflict type="erroneous initiation">
        <sequence resource="EMBL-CDS" id="BAC98265"/>
    </conflict>
</comment>